<reference key="1">
    <citation type="journal article" date="2008" name="J. Virol.">
        <title>Full genome-based classification of rotaviruses reveals a common origin between human Wa-Like and porcine rotavirus strains and human DS-1-like and bovine rotavirus strains.</title>
        <authorList>
            <person name="Matthijnssens J."/>
            <person name="Ciarlet M."/>
            <person name="Heiman E.M."/>
            <person name="Arijs I."/>
            <person name="Delbeke T."/>
            <person name="McDonald S.M."/>
            <person name="Palombo E.A."/>
            <person name="Iturriza-Gomara M."/>
            <person name="Maes P."/>
            <person name="Patton J.T."/>
            <person name="Rahman M."/>
            <person name="Van Ranst M."/>
        </authorList>
    </citation>
    <scope>NUCLEOTIDE SEQUENCE [GENOMIC RNA]</scope>
</reference>
<organismHost>
    <name type="scientific">Bos taurus</name>
    <name type="common">Bovine</name>
    <dbReference type="NCBI Taxonomy" id="9913"/>
</organismHost>
<sequence length="1088" mass="125075">MGKYNLILSEYLSFIYNSQSAVQIPIYYSSNSELENRCIEFHSKCLENSKNGLPLKKLFVEYSDVIENATLLSILSYSYDKYNAVERKLVKYAKGKPLEADLTVNELDYENNKITSELFPTAEEYTDSLMDPAILTSLSSNLNAVMFWLEKHENDAAEKLKIYKRRLDLFTIVASTVNKYGVPRHNEKYRYEYEVMKDKPYYLVTWANSSIEMLMSVFSHEDYLIARELIVLSYSNRSTLAKLVSSPMSILVALVDINGTFITNEELELEFSNKYVRAIVPDQTFDELKQMLDNMRKAGLTDIPKMIQDWLADCSIEKFPLMAKIYSWSFHVGFRKQKMLDAALDQLKTEYTEDIDDEMYREYTMLIRDEVVKMLKEPVKHDDHLLQDSELAGLLSMSSASNGESRQLKFGRKTIFSTKKNMHVMDDMANGRYTPGIIPPVNVDKPIPLGRRDVPGRRTRIIFILPYEYFIAQHAVVEKMLIYAKHTREYAEFYSQSNQLLSYGDVTRFLSNNSMVLYTDVSQWDSSQHNTQPFRKGIIMGLDMLANMTNDARVIQTLNLYKQTQINLMDSYVQIPDGDVIKKIQYGAVASGEKQTKAANSIANLALIKTVLSRISNKYSFATKIIRVDGDDNYAVLQFNTEVTKQMVQDVSNDVRETYARMNAKVKALVSTVGIEIAKRYIAGGKIFFRAGINLLNNEKRGQSTQWDQAAVLYSNYIVNRLRGFETDREFILTKIMQMTSVAITGSLRLFPSERVLTTNSTFKVFDSEDFIIEYGTTDDEVYIQRAFMSLSSQKSGIADEIAASSTFKNYVSRLSEQLLFSKNNIVSKGIALTEKAKLNSYAPISLEKRRAQISALLTMLQKPVTFKSSKITINDILRDIKPFFTVSEAHLPIQYQKFMPTLPDNVQYIIQCIGSRTYQIEDDGSKSAISRLISKYSVYKPSIEELYKVISLHENEIQLYLISLGIPKIDADTYVGSKIYSQDKYRILESYVYNLLSINYGCYQLFDFNSPDLEKLIRIPFKGKIPAVTFILHLYAKLEVINHAIKNGSWISLFCNYPKSEMIKLWKKMWNITSLRSPYTNANFFQD</sequence>
<dbReference type="EC" id="2.7.7.48"/>
<dbReference type="EMBL" id="EF560615">
    <property type="protein sequence ID" value="ABU48676.1"/>
    <property type="molecule type" value="Genomic_RNA"/>
</dbReference>
<dbReference type="SMR" id="B2BMF7"/>
<dbReference type="Proteomes" id="UP000007181">
    <property type="component" value="Genome"/>
</dbReference>
<dbReference type="GO" id="GO:0044423">
    <property type="term" value="C:virion component"/>
    <property type="evidence" value="ECO:0007669"/>
    <property type="project" value="UniProtKB-KW"/>
</dbReference>
<dbReference type="GO" id="GO:0000166">
    <property type="term" value="F:nucleotide binding"/>
    <property type="evidence" value="ECO:0007669"/>
    <property type="project" value="UniProtKB-KW"/>
</dbReference>
<dbReference type="GO" id="GO:0003723">
    <property type="term" value="F:RNA binding"/>
    <property type="evidence" value="ECO:0007669"/>
    <property type="project" value="UniProtKB-KW"/>
</dbReference>
<dbReference type="GO" id="GO:0003968">
    <property type="term" value="F:RNA-directed RNA polymerase activity"/>
    <property type="evidence" value="ECO:0007669"/>
    <property type="project" value="UniProtKB-KW"/>
</dbReference>
<dbReference type="GO" id="GO:0006351">
    <property type="term" value="P:DNA-templated transcription"/>
    <property type="evidence" value="ECO:0007669"/>
    <property type="project" value="InterPro"/>
</dbReference>
<dbReference type="GO" id="GO:0019079">
    <property type="term" value="P:viral genome replication"/>
    <property type="evidence" value="ECO:0007669"/>
    <property type="project" value="InterPro"/>
</dbReference>
<dbReference type="Gene3D" id="1.10.357.80">
    <property type="match status" value="2"/>
</dbReference>
<dbReference type="Gene3D" id="1.20.120.1390">
    <property type="match status" value="1"/>
</dbReference>
<dbReference type="Gene3D" id="3.30.230.140">
    <property type="match status" value="2"/>
</dbReference>
<dbReference type="Gene3D" id="3.30.70.2480">
    <property type="match status" value="1"/>
</dbReference>
<dbReference type="Gene3D" id="1.10.10.1990">
    <property type="entry name" value="Viral RNA-directed RNA polymerase, 4-helical domain"/>
    <property type="match status" value="1"/>
</dbReference>
<dbReference type="InterPro" id="IPR043502">
    <property type="entry name" value="DNA/RNA_pol_sf"/>
</dbReference>
<dbReference type="InterPro" id="IPR042032">
    <property type="entry name" value="RNA-dir_pol_4-hel_dom"/>
</dbReference>
<dbReference type="InterPro" id="IPR001795">
    <property type="entry name" value="RNA-dir_pol_luteovirus"/>
</dbReference>
<dbReference type="InterPro" id="IPR007097">
    <property type="entry name" value="RNA-dir_pol_reovirus"/>
</dbReference>
<dbReference type="InterPro" id="IPR022071">
    <property type="entry name" value="Rotavirus_VP1_C"/>
</dbReference>
<dbReference type="Pfam" id="PF02123">
    <property type="entry name" value="RdRP_4"/>
    <property type="match status" value="1"/>
</dbReference>
<dbReference type="Pfam" id="PF12289">
    <property type="entry name" value="Rotavirus_VP1"/>
    <property type="match status" value="1"/>
</dbReference>
<dbReference type="SUPFAM" id="SSF56672">
    <property type="entry name" value="DNA/RNA polymerases"/>
    <property type="match status" value="1"/>
</dbReference>
<dbReference type="PROSITE" id="PS50523">
    <property type="entry name" value="RDRP_DSRNA_REO"/>
    <property type="match status" value="1"/>
</dbReference>
<keyword id="KW-0460">Magnesium</keyword>
<keyword id="KW-0547">Nucleotide-binding</keyword>
<keyword id="KW-0548">Nucleotidyltransferase</keyword>
<keyword id="KW-0694">RNA-binding</keyword>
<keyword id="KW-0696">RNA-directed RNA polymerase</keyword>
<keyword id="KW-0808">Transferase</keyword>
<keyword id="KW-0693">Viral RNA replication</keyword>
<keyword id="KW-0946">Virion</keyword>
<proteinExistence type="inferred from homology"/>
<protein>
    <recommendedName>
        <fullName>RNA-directed RNA polymerase</fullName>
        <ecNumber>2.7.7.48</ecNumber>
    </recommendedName>
    <alternativeName>
        <fullName>Protein VP1</fullName>
    </alternativeName>
</protein>
<feature type="chain" id="PRO_0000368037" description="RNA-directed RNA polymerase">
    <location>
        <begin position="1"/>
        <end position="1088"/>
    </location>
</feature>
<feature type="domain" description="RdRp catalytic" evidence="2">
    <location>
        <begin position="501"/>
        <end position="687"/>
    </location>
</feature>
<comment type="function">
    <text evidence="2">RNA-directed RNA polymerase that is involved in both transcription and genome replication. Together with VP3 capping enzyme, forms an enzyme complex positioned near the channels situated at each of the five-fold vertices of the core. Following infection, the outermost layer of the virus is lost, leaving a double-layered particle (DLP) made up of the core and VP6 shell. VP1 then catalyzes the transcription of fully conservative plus-strand genomic RNAs that are extruded through the DLP's channels into the cytoplasm where they function as mRNAs for translation of viral proteins. One copy of each of the viral (+)RNAs is also recruited during core assembly, together with newly synthesized polymerase complexes and VP2. The polymerase of these novo-formed particles catalyzes the synthesis of complementary minus-strands leading to dsRNA formation. To do so, the polymerase specifically recognizes and binds 4 bases 5'-UGUG-3' in the conserved 3'-sequence of plus-strand RNA templates. VP2 presumably activates the autoinhibited VP1-RNA complex to coordinate packaging and genome replication. Once dsRNA synthesis is complete, the polymerase switches to the transcriptional mode, thus providing secondary transcription (By similarity).</text>
</comment>
<comment type="catalytic activity">
    <reaction evidence="2">
        <text>RNA(n) + a ribonucleoside 5'-triphosphate = RNA(n+1) + diphosphate</text>
        <dbReference type="Rhea" id="RHEA:21248"/>
        <dbReference type="Rhea" id="RHEA-COMP:14527"/>
        <dbReference type="Rhea" id="RHEA-COMP:17342"/>
        <dbReference type="ChEBI" id="CHEBI:33019"/>
        <dbReference type="ChEBI" id="CHEBI:61557"/>
        <dbReference type="ChEBI" id="CHEBI:140395"/>
        <dbReference type="EC" id="2.7.7.48"/>
    </reaction>
</comment>
<comment type="cofactor">
    <cofactor evidence="3">
        <name>Mg(2+)</name>
        <dbReference type="ChEBI" id="CHEBI:18420"/>
    </cofactor>
</comment>
<comment type="subunit">
    <text evidence="1 3">Interacts with VP3 (Potential). Interacts with VP2; this interaction activates VP1. Interacts with NSP5; this interaction is probably necessary for the formation of functional virus factories. Interacts with NSP2; this interaction is weak (By similarity).</text>
</comment>
<comment type="subcellular location">
    <subcellularLocation>
        <location evidence="3">Virion</location>
    </subcellularLocation>
    <text evidence="1">Attached inside the inner capsid as a minor component. Also found in spherical cytoplasmic structures, called virus factories, that appear early after infection and are the site of viral replication and packaging (By similarity).</text>
</comment>
<comment type="similarity">
    <text evidence="3">Belongs to the reoviridae RNA-directed RNA polymerase family.</text>
</comment>
<accession>B2BMF7</accession>
<organism>
    <name type="scientific">Rotavirus A (strain RVA/Cow/United States/WC3/1981/G6P7[5])</name>
    <name type="common">RV-A</name>
    <name type="synonym">Rotavirus (strain Wistar calf 3)</name>
    <dbReference type="NCBI Taxonomy" id="578828"/>
    <lineage>
        <taxon>Viruses</taxon>
        <taxon>Riboviria</taxon>
        <taxon>Orthornavirae</taxon>
        <taxon>Duplornaviricota</taxon>
        <taxon>Resentoviricetes</taxon>
        <taxon>Reovirales</taxon>
        <taxon>Sedoreoviridae</taxon>
        <taxon>Rotavirus</taxon>
        <taxon>Rotavirus A</taxon>
    </lineage>
</organism>
<evidence type="ECO:0000250" key="1"/>
<evidence type="ECO:0000255" key="2">
    <source>
        <dbReference type="PROSITE-ProRule" id="PRU00539"/>
    </source>
</evidence>
<evidence type="ECO:0000305" key="3"/>
<name>RDRP_ROTW3</name>